<name>RPOA_STAES</name>
<organism>
    <name type="scientific">Staphylococcus epidermidis (strain ATCC 12228 / FDA PCI 1200)</name>
    <dbReference type="NCBI Taxonomy" id="176280"/>
    <lineage>
        <taxon>Bacteria</taxon>
        <taxon>Bacillati</taxon>
        <taxon>Bacillota</taxon>
        <taxon>Bacilli</taxon>
        <taxon>Bacillales</taxon>
        <taxon>Staphylococcaceae</taxon>
        <taxon>Staphylococcus</taxon>
    </lineage>
</organism>
<feature type="chain" id="PRO_0000175385" description="DNA-directed RNA polymerase subunit alpha">
    <location>
        <begin position="1"/>
        <end position="314"/>
    </location>
</feature>
<feature type="region of interest" description="Alpha N-terminal domain (alpha-NTD)" evidence="1">
    <location>
        <begin position="1"/>
        <end position="228"/>
    </location>
</feature>
<feature type="region of interest" description="Alpha C-terminal domain (alpha-CTD)" evidence="1">
    <location>
        <begin position="245"/>
        <end position="314"/>
    </location>
</feature>
<protein>
    <recommendedName>
        <fullName evidence="1">DNA-directed RNA polymerase subunit alpha</fullName>
        <shortName evidence="1">RNAP subunit alpha</shortName>
        <ecNumber evidence="1">2.7.7.6</ecNumber>
    </recommendedName>
    <alternativeName>
        <fullName evidence="1">RNA polymerase subunit alpha</fullName>
    </alternativeName>
    <alternativeName>
        <fullName evidence="1">Transcriptase subunit alpha</fullName>
    </alternativeName>
</protein>
<dbReference type="EC" id="2.7.7.6" evidence="1"/>
<dbReference type="EMBL" id="AE015929">
    <property type="protein sequence ID" value="AAO05438.1"/>
    <property type="molecule type" value="Genomic_DNA"/>
</dbReference>
<dbReference type="RefSeq" id="NP_765352.1">
    <property type="nucleotide sequence ID" value="NC_004461.1"/>
</dbReference>
<dbReference type="RefSeq" id="WP_001829787.1">
    <property type="nucleotide sequence ID" value="NZ_WBME01000007.1"/>
</dbReference>
<dbReference type="SMR" id="Q8CRI4"/>
<dbReference type="KEGG" id="sep:SE_1797"/>
<dbReference type="PATRIC" id="fig|176280.10.peg.1754"/>
<dbReference type="eggNOG" id="COG0202">
    <property type="taxonomic scope" value="Bacteria"/>
</dbReference>
<dbReference type="HOGENOM" id="CLU_053084_0_1_9"/>
<dbReference type="OrthoDB" id="9805706at2"/>
<dbReference type="Proteomes" id="UP000001411">
    <property type="component" value="Chromosome"/>
</dbReference>
<dbReference type="GO" id="GO:0005737">
    <property type="term" value="C:cytoplasm"/>
    <property type="evidence" value="ECO:0007669"/>
    <property type="project" value="UniProtKB-ARBA"/>
</dbReference>
<dbReference type="GO" id="GO:0000428">
    <property type="term" value="C:DNA-directed RNA polymerase complex"/>
    <property type="evidence" value="ECO:0007669"/>
    <property type="project" value="UniProtKB-KW"/>
</dbReference>
<dbReference type="GO" id="GO:0003677">
    <property type="term" value="F:DNA binding"/>
    <property type="evidence" value="ECO:0007669"/>
    <property type="project" value="UniProtKB-UniRule"/>
</dbReference>
<dbReference type="GO" id="GO:0003899">
    <property type="term" value="F:DNA-directed RNA polymerase activity"/>
    <property type="evidence" value="ECO:0007669"/>
    <property type="project" value="UniProtKB-UniRule"/>
</dbReference>
<dbReference type="GO" id="GO:0046983">
    <property type="term" value="F:protein dimerization activity"/>
    <property type="evidence" value="ECO:0007669"/>
    <property type="project" value="InterPro"/>
</dbReference>
<dbReference type="GO" id="GO:0006351">
    <property type="term" value="P:DNA-templated transcription"/>
    <property type="evidence" value="ECO:0007669"/>
    <property type="project" value="UniProtKB-UniRule"/>
</dbReference>
<dbReference type="CDD" id="cd06928">
    <property type="entry name" value="RNAP_alpha_NTD"/>
    <property type="match status" value="1"/>
</dbReference>
<dbReference type="FunFam" id="1.10.150.20:FF:000001">
    <property type="entry name" value="DNA-directed RNA polymerase subunit alpha"/>
    <property type="match status" value="1"/>
</dbReference>
<dbReference type="FunFam" id="2.170.120.12:FF:000001">
    <property type="entry name" value="DNA-directed RNA polymerase subunit alpha"/>
    <property type="match status" value="1"/>
</dbReference>
<dbReference type="Gene3D" id="1.10.150.20">
    <property type="entry name" value="5' to 3' exonuclease, C-terminal subdomain"/>
    <property type="match status" value="1"/>
</dbReference>
<dbReference type="Gene3D" id="2.170.120.12">
    <property type="entry name" value="DNA-directed RNA polymerase, insert domain"/>
    <property type="match status" value="1"/>
</dbReference>
<dbReference type="Gene3D" id="3.30.1360.10">
    <property type="entry name" value="RNA polymerase, RBP11-like subunit"/>
    <property type="match status" value="1"/>
</dbReference>
<dbReference type="HAMAP" id="MF_00059">
    <property type="entry name" value="RNApol_bact_RpoA"/>
    <property type="match status" value="1"/>
</dbReference>
<dbReference type="InterPro" id="IPR011262">
    <property type="entry name" value="DNA-dir_RNA_pol_insert"/>
</dbReference>
<dbReference type="InterPro" id="IPR011263">
    <property type="entry name" value="DNA-dir_RNA_pol_RpoA/D/Rpb3"/>
</dbReference>
<dbReference type="InterPro" id="IPR011773">
    <property type="entry name" value="DNA-dir_RpoA"/>
</dbReference>
<dbReference type="InterPro" id="IPR036603">
    <property type="entry name" value="RBP11-like"/>
</dbReference>
<dbReference type="InterPro" id="IPR011260">
    <property type="entry name" value="RNAP_asu_C"/>
</dbReference>
<dbReference type="InterPro" id="IPR036643">
    <property type="entry name" value="RNApol_insert_sf"/>
</dbReference>
<dbReference type="NCBIfam" id="NF003513">
    <property type="entry name" value="PRK05182.1-2"/>
    <property type="match status" value="1"/>
</dbReference>
<dbReference type="NCBIfam" id="NF003515">
    <property type="entry name" value="PRK05182.2-1"/>
    <property type="match status" value="1"/>
</dbReference>
<dbReference type="NCBIfam" id="NF003519">
    <property type="entry name" value="PRK05182.2-5"/>
    <property type="match status" value="1"/>
</dbReference>
<dbReference type="NCBIfam" id="TIGR02027">
    <property type="entry name" value="rpoA"/>
    <property type="match status" value="1"/>
</dbReference>
<dbReference type="Pfam" id="PF01000">
    <property type="entry name" value="RNA_pol_A_bac"/>
    <property type="match status" value="1"/>
</dbReference>
<dbReference type="Pfam" id="PF03118">
    <property type="entry name" value="RNA_pol_A_CTD"/>
    <property type="match status" value="1"/>
</dbReference>
<dbReference type="Pfam" id="PF01193">
    <property type="entry name" value="RNA_pol_L"/>
    <property type="match status" value="1"/>
</dbReference>
<dbReference type="SMART" id="SM00662">
    <property type="entry name" value="RPOLD"/>
    <property type="match status" value="1"/>
</dbReference>
<dbReference type="SUPFAM" id="SSF47789">
    <property type="entry name" value="C-terminal domain of RNA polymerase alpha subunit"/>
    <property type="match status" value="1"/>
</dbReference>
<dbReference type="SUPFAM" id="SSF56553">
    <property type="entry name" value="Insert subdomain of RNA polymerase alpha subunit"/>
    <property type="match status" value="1"/>
</dbReference>
<dbReference type="SUPFAM" id="SSF55257">
    <property type="entry name" value="RBP11-like subunits of RNA polymerase"/>
    <property type="match status" value="1"/>
</dbReference>
<comment type="function">
    <text evidence="1">DNA-dependent RNA polymerase catalyzes the transcription of DNA into RNA using the four ribonucleoside triphosphates as substrates.</text>
</comment>
<comment type="catalytic activity">
    <reaction evidence="1">
        <text>RNA(n) + a ribonucleoside 5'-triphosphate = RNA(n+1) + diphosphate</text>
        <dbReference type="Rhea" id="RHEA:21248"/>
        <dbReference type="Rhea" id="RHEA-COMP:14527"/>
        <dbReference type="Rhea" id="RHEA-COMP:17342"/>
        <dbReference type="ChEBI" id="CHEBI:33019"/>
        <dbReference type="ChEBI" id="CHEBI:61557"/>
        <dbReference type="ChEBI" id="CHEBI:140395"/>
        <dbReference type="EC" id="2.7.7.6"/>
    </reaction>
</comment>
<comment type="subunit">
    <text evidence="1">Homodimer. The RNAP catalytic core consists of 2 alpha, 1 beta, 1 beta' and 1 omega subunit. When a sigma factor is associated with the core the holoenzyme is formed, which can initiate transcription.</text>
</comment>
<comment type="domain">
    <text evidence="1">The N-terminal domain is essential for RNAP assembly and basal transcription, whereas the C-terminal domain is involved in interaction with transcriptional regulators and with upstream promoter elements.</text>
</comment>
<comment type="similarity">
    <text evidence="1">Belongs to the RNA polymerase alpha chain family.</text>
</comment>
<evidence type="ECO:0000255" key="1">
    <source>
        <dbReference type="HAMAP-Rule" id="MF_00059"/>
    </source>
</evidence>
<reference key="1">
    <citation type="journal article" date="2003" name="Mol. Microbiol.">
        <title>Genome-based analysis of virulence genes in a non-biofilm-forming Staphylococcus epidermidis strain (ATCC 12228).</title>
        <authorList>
            <person name="Zhang Y.-Q."/>
            <person name="Ren S.-X."/>
            <person name="Li H.-L."/>
            <person name="Wang Y.-X."/>
            <person name="Fu G."/>
            <person name="Yang J."/>
            <person name="Qin Z.-Q."/>
            <person name="Miao Y.-G."/>
            <person name="Wang W.-Y."/>
            <person name="Chen R.-S."/>
            <person name="Shen Y."/>
            <person name="Chen Z."/>
            <person name="Yuan Z.-H."/>
            <person name="Zhao G.-P."/>
            <person name="Qu D."/>
            <person name="Danchin A."/>
            <person name="Wen Y.-M."/>
        </authorList>
    </citation>
    <scope>NUCLEOTIDE SEQUENCE [LARGE SCALE GENOMIC DNA]</scope>
    <source>
        <strain>ATCC 12228 / FDA PCI 1200</strain>
    </source>
</reference>
<gene>
    <name evidence="1" type="primary">rpoA</name>
    <name type="ordered locus">SE_1797</name>
</gene>
<proteinExistence type="inferred from homology"/>
<accession>Q8CRI4</accession>
<keyword id="KW-0240">DNA-directed RNA polymerase</keyword>
<keyword id="KW-0548">Nucleotidyltransferase</keyword>
<keyword id="KW-0804">Transcription</keyword>
<keyword id="KW-0808">Transferase</keyword>
<sequence length="314" mass="34986">MIEIEKPRIETIEVSEDAKFGKFVVEPLERGYGTTLGNSLRRILLSSLPGAAVKYIEIEGVLHEFSAVDNVVEDVSTIIMNIKKLALKIYSEEDKTLEIDVKDEGEVTASDITHDSDVEILNPELKIATVSKGGHLKVRLVANKGRGYALAEQNNTSDLPIGVIPVDSLYSPVERVNYTVENTRVGQSSDFDKLTLDVWTNGSITPQESVSLAAKIMTEHLNIFVSLTDEAQNAEIMIEKEEDQKEKVLEMSIEELDLSVRSYNCLKRAGINSVQELADKSEADMMKVRNLGRKSLEEVKYKLEDLGLGLRKED</sequence>